<name>RL5_ALBFT</name>
<sequence length="179" mass="20061">MARLQQHFREKLAPELMAKFGYTSPMQVPRLTKITLNMGVSEAVADKKVMDHAVSDLGKIAGQKPVVTMSKKAIAGFKIRENQAIGCMVTLRGVQMFEFLDRFVTVALPRVRDFRGISGRAFDGRGNYNIGVKEQIIFPEIEYDKVDALRGLNISITTTAKTDEECKALLTGFRFPFKN</sequence>
<proteinExistence type="inferred from homology"/>
<accession>Q21QN5</accession>
<protein>
    <recommendedName>
        <fullName evidence="1">Large ribosomal subunit protein uL5</fullName>
    </recommendedName>
    <alternativeName>
        <fullName evidence="2">50S ribosomal protein L5</fullName>
    </alternativeName>
</protein>
<comment type="function">
    <text evidence="1">This is one of the proteins that bind and probably mediate the attachment of the 5S RNA into the large ribosomal subunit, where it forms part of the central protuberance. In the 70S ribosome it contacts protein S13 of the 30S subunit (bridge B1b), connecting the 2 subunits; this bridge is implicated in subunit movement. Contacts the P site tRNA; the 5S rRNA and some of its associated proteins might help stabilize positioning of ribosome-bound tRNAs.</text>
</comment>
<comment type="subunit">
    <text evidence="1">Part of the 50S ribosomal subunit; part of the 5S rRNA/L5/L18/L25 subcomplex. Contacts the 5S rRNA and the P site tRNA. Forms a bridge to the 30S subunit in the 70S ribosome.</text>
</comment>
<comment type="similarity">
    <text evidence="1">Belongs to the universal ribosomal protein uL5 family.</text>
</comment>
<feature type="chain" id="PRO_0000243051" description="Large ribosomal subunit protein uL5">
    <location>
        <begin position="1"/>
        <end position="179"/>
    </location>
</feature>
<evidence type="ECO:0000255" key="1">
    <source>
        <dbReference type="HAMAP-Rule" id="MF_01333"/>
    </source>
</evidence>
<evidence type="ECO:0000305" key="2"/>
<dbReference type="EMBL" id="CP000267">
    <property type="protein sequence ID" value="ABD71918.1"/>
    <property type="molecule type" value="Genomic_DNA"/>
</dbReference>
<dbReference type="RefSeq" id="WP_011466475.1">
    <property type="nucleotide sequence ID" value="NC_007908.1"/>
</dbReference>
<dbReference type="SMR" id="Q21QN5"/>
<dbReference type="STRING" id="338969.Rfer_4231"/>
<dbReference type="KEGG" id="rfr:Rfer_4231"/>
<dbReference type="eggNOG" id="COG0094">
    <property type="taxonomic scope" value="Bacteria"/>
</dbReference>
<dbReference type="HOGENOM" id="CLU_061015_2_1_4"/>
<dbReference type="OrthoDB" id="9806626at2"/>
<dbReference type="Proteomes" id="UP000008332">
    <property type="component" value="Chromosome"/>
</dbReference>
<dbReference type="GO" id="GO:1990904">
    <property type="term" value="C:ribonucleoprotein complex"/>
    <property type="evidence" value="ECO:0007669"/>
    <property type="project" value="UniProtKB-KW"/>
</dbReference>
<dbReference type="GO" id="GO:0005840">
    <property type="term" value="C:ribosome"/>
    <property type="evidence" value="ECO:0007669"/>
    <property type="project" value="UniProtKB-KW"/>
</dbReference>
<dbReference type="GO" id="GO:0019843">
    <property type="term" value="F:rRNA binding"/>
    <property type="evidence" value="ECO:0007669"/>
    <property type="project" value="UniProtKB-UniRule"/>
</dbReference>
<dbReference type="GO" id="GO:0003735">
    <property type="term" value="F:structural constituent of ribosome"/>
    <property type="evidence" value="ECO:0007669"/>
    <property type="project" value="InterPro"/>
</dbReference>
<dbReference type="GO" id="GO:0000049">
    <property type="term" value="F:tRNA binding"/>
    <property type="evidence" value="ECO:0007669"/>
    <property type="project" value="UniProtKB-UniRule"/>
</dbReference>
<dbReference type="GO" id="GO:0006412">
    <property type="term" value="P:translation"/>
    <property type="evidence" value="ECO:0007669"/>
    <property type="project" value="UniProtKB-UniRule"/>
</dbReference>
<dbReference type="FunFam" id="3.30.1440.10:FF:000001">
    <property type="entry name" value="50S ribosomal protein L5"/>
    <property type="match status" value="1"/>
</dbReference>
<dbReference type="Gene3D" id="3.30.1440.10">
    <property type="match status" value="1"/>
</dbReference>
<dbReference type="HAMAP" id="MF_01333_B">
    <property type="entry name" value="Ribosomal_uL5_B"/>
    <property type="match status" value="1"/>
</dbReference>
<dbReference type="InterPro" id="IPR002132">
    <property type="entry name" value="Ribosomal_uL5"/>
</dbReference>
<dbReference type="InterPro" id="IPR020930">
    <property type="entry name" value="Ribosomal_uL5_bac-type"/>
</dbReference>
<dbReference type="InterPro" id="IPR031309">
    <property type="entry name" value="Ribosomal_uL5_C"/>
</dbReference>
<dbReference type="InterPro" id="IPR020929">
    <property type="entry name" value="Ribosomal_uL5_CS"/>
</dbReference>
<dbReference type="InterPro" id="IPR022803">
    <property type="entry name" value="Ribosomal_uL5_dom_sf"/>
</dbReference>
<dbReference type="InterPro" id="IPR031310">
    <property type="entry name" value="Ribosomal_uL5_N"/>
</dbReference>
<dbReference type="NCBIfam" id="NF000585">
    <property type="entry name" value="PRK00010.1"/>
    <property type="match status" value="1"/>
</dbReference>
<dbReference type="PANTHER" id="PTHR11994">
    <property type="entry name" value="60S RIBOSOMAL PROTEIN L11-RELATED"/>
    <property type="match status" value="1"/>
</dbReference>
<dbReference type="Pfam" id="PF00281">
    <property type="entry name" value="Ribosomal_L5"/>
    <property type="match status" value="1"/>
</dbReference>
<dbReference type="Pfam" id="PF00673">
    <property type="entry name" value="Ribosomal_L5_C"/>
    <property type="match status" value="1"/>
</dbReference>
<dbReference type="PIRSF" id="PIRSF002161">
    <property type="entry name" value="Ribosomal_L5"/>
    <property type="match status" value="1"/>
</dbReference>
<dbReference type="SUPFAM" id="SSF55282">
    <property type="entry name" value="RL5-like"/>
    <property type="match status" value="1"/>
</dbReference>
<dbReference type="PROSITE" id="PS00358">
    <property type="entry name" value="RIBOSOMAL_L5"/>
    <property type="match status" value="1"/>
</dbReference>
<gene>
    <name evidence="1" type="primary">rplE</name>
    <name type="ordered locus">Rfer_4231</name>
</gene>
<reference key="1">
    <citation type="submission" date="2006-02" db="EMBL/GenBank/DDBJ databases">
        <title>Complete sequence of chromosome of Rhodoferax ferrireducens DSM 15236.</title>
        <authorList>
            <person name="Copeland A."/>
            <person name="Lucas S."/>
            <person name="Lapidus A."/>
            <person name="Barry K."/>
            <person name="Detter J.C."/>
            <person name="Glavina del Rio T."/>
            <person name="Hammon N."/>
            <person name="Israni S."/>
            <person name="Pitluck S."/>
            <person name="Brettin T."/>
            <person name="Bruce D."/>
            <person name="Han C."/>
            <person name="Tapia R."/>
            <person name="Gilna P."/>
            <person name="Kiss H."/>
            <person name="Schmutz J."/>
            <person name="Larimer F."/>
            <person name="Land M."/>
            <person name="Kyrpides N."/>
            <person name="Ivanova N."/>
            <person name="Richardson P."/>
        </authorList>
    </citation>
    <scope>NUCLEOTIDE SEQUENCE [LARGE SCALE GENOMIC DNA]</scope>
    <source>
        <strain>ATCC BAA-621 / DSM 15236 / T118</strain>
    </source>
</reference>
<organism>
    <name type="scientific">Albidiferax ferrireducens (strain ATCC BAA-621 / DSM 15236 / T118)</name>
    <name type="common">Rhodoferax ferrireducens</name>
    <dbReference type="NCBI Taxonomy" id="338969"/>
    <lineage>
        <taxon>Bacteria</taxon>
        <taxon>Pseudomonadati</taxon>
        <taxon>Pseudomonadota</taxon>
        <taxon>Betaproteobacteria</taxon>
        <taxon>Burkholderiales</taxon>
        <taxon>Comamonadaceae</taxon>
        <taxon>Rhodoferax</taxon>
    </lineage>
</organism>
<keyword id="KW-1185">Reference proteome</keyword>
<keyword id="KW-0687">Ribonucleoprotein</keyword>
<keyword id="KW-0689">Ribosomal protein</keyword>
<keyword id="KW-0694">RNA-binding</keyword>
<keyword id="KW-0699">rRNA-binding</keyword>
<keyword id="KW-0820">tRNA-binding</keyword>